<name>RBP1_HUMAN</name>
<sequence>MTECFLPPTSSPSEHRRVEHGSGLTRTPSSEEISPTKFPGLYRTGEPSPPHDILHEPPDVVSDDEKDHGKKKGKFKKKEKRTEGYAAFQEDSSGDEAESPSKMKRSKGIHVFKKPSFSKKKEKDFKIKEKPKEEKHKEEKHKEEKHKEKKSKDLTAADVVKQWKEKKKKKKPIQEPEVPQIDVPNLKPIFGIPLADAVERTMMYDGIRLPAVFRECIDYVEKYGMKCEGIYRVSGIKSKVDELKAAYDREESTNLEDYEPNTVASLLKQYLRDLPENLLTKELMPRFEEACGRTTETEKVQEFQRLLKELPECNYLLISWLIVHMDHVIAKELETKMNIQNISIVLSPTVQISNRVLYVFFTHVQELFGNVVLKQVMKPLRWSNMATMPTLPETQAGIKEEIRRQEFLLNCLHRDLQGGIKDLSKEERLWEVQRILTALKRKLREAKRQECETKIAQEIASLSKEDVSKEEMNENEEVINILLAQENEILTEQEELLAMEQFLRRQIASEKEEIERLRAEIAEIQSRQQHGRSETEEYSSESESESEDEEELQIILEDLQRQNEELEIKNNHLNQAIHEEREAIIELRVQLRLLQMQRAKAEQQAQEDEEPEWRGGAVQPPRDGVLEPKAAKEQPKAGKEPAKPSPSRDRKETSI</sequence>
<proteinExistence type="evidence at protein level"/>
<evidence type="ECO:0000250" key="1">
    <source>
        <dbReference type="UniProtKB" id="Q62172"/>
    </source>
</evidence>
<evidence type="ECO:0000250" key="2">
    <source>
        <dbReference type="UniProtKB" id="Q62796"/>
    </source>
</evidence>
<evidence type="ECO:0000250" key="3">
    <source>
        <dbReference type="UniProtKB" id="Q9PT60"/>
    </source>
</evidence>
<evidence type="ECO:0000255" key="4">
    <source>
        <dbReference type="PROSITE-ProRule" id="PRU00172"/>
    </source>
</evidence>
<evidence type="ECO:0000256" key="5">
    <source>
        <dbReference type="SAM" id="MobiDB-lite"/>
    </source>
</evidence>
<evidence type="ECO:0000269" key="6">
    <source>
    </source>
</evidence>
<evidence type="ECO:0000269" key="7">
    <source>
    </source>
</evidence>
<evidence type="ECO:0000269" key="8">
    <source>
    </source>
</evidence>
<evidence type="ECO:0000269" key="9">
    <source>
    </source>
</evidence>
<evidence type="ECO:0000269" key="10">
    <source>
    </source>
</evidence>
<evidence type="ECO:0000269" key="11">
    <source>
    </source>
</evidence>
<evidence type="ECO:0000269" key="12">
    <source>
    </source>
</evidence>
<evidence type="ECO:0000269" key="13">
    <source>
    </source>
</evidence>
<evidence type="ECO:0000269" key="14">
    <source>
    </source>
</evidence>
<evidence type="ECO:0000269" key="15">
    <source>
    </source>
</evidence>
<evidence type="ECO:0000269" key="16">
    <source>
    </source>
</evidence>
<evidence type="ECO:0000269" key="17">
    <source>
    </source>
</evidence>
<evidence type="ECO:0000303" key="18">
    <source>
    </source>
</evidence>
<evidence type="ECO:0000303" key="19">
    <source>
    </source>
</evidence>
<evidence type="ECO:0000303" key="20">
    <source>
    </source>
</evidence>
<evidence type="ECO:0000303" key="21">
    <source>
    </source>
</evidence>
<evidence type="ECO:0000305" key="22">
    <source>
    </source>
</evidence>
<evidence type="ECO:0000305" key="23">
    <source>
    </source>
</evidence>
<evidence type="ECO:0000305" key="24">
    <source>
    </source>
</evidence>
<evidence type="ECO:0000305" key="25">
    <source>
    </source>
</evidence>
<evidence type="ECO:0000305" key="26">
    <source>
    </source>
</evidence>
<evidence type="ECO:0000312" key="27">
    <source>
        <dbReference type="HGNC" id="HGNC:9841"/>
    </source>
</evidence>
<evidence type="ECO:0007744" key="28">
    <source>
        <dbReference type="PDB" id="2KWH"/>
    </source>
</evidence>
<evidence type="ECO:0007744" key="29">
    <source>
        <dbReference type="PDB" id="2KWI"/>
    </source>
</evidence>
<evidence type="ECO:0007744" key="30">
    <source>
        <dbReference type="PDB" id="2MBG"/>
    </source>
</evidence>
<evidence type="ECO:0007744" key="31">
    <source>
    </source>
</evidence>
<evidence type="ECO:0007744" key="32">
    <source>
    </source>
</evidence>
<evidence type="ECO:0007744" key="33">
    <source>
    </source>
</evidence>
<evidence type="ECO:0007744" key="34">
    <source>
    </source>
</evidence>
<evidence type="ECO:0007744" key="35">
    <source>
    </source>
</evidence>
<evidence type="ECO:0007744" key="36">
    <source>
    </source>
</evidence>
<evidence type="ECO:0007744" key="37">
    <source>
    </source>
</evidence>
<evidence type="ECO:0007829" key="38">
    <source>
        <dbReference type="PDB" id="2MBG"/>
    </source>
</evidence>
<evidence type="ECO:0007829" key="39">
    <source>
        <dbReference type="PDB" id="6ZRN"/>
    </source>
</evidence>
<organism>
    <name type="scientific">Homo sapiens</name>
    <name type="common">Human</name>
    <dbReference type="NCBI Taxonomy" id="9606"/>
    <lineage>
        <taxon>Eukaryota</taxon>
        <taxon>Metazoa</taxon>
        <taxon>Chordata</taxon>
        <taxon>Craniata</taxon>
        <taxon>Vertebrata</taxon>
        <taxon>Euteleostomi</taxon>
        <taxon>Mammalia</taxon>
        <taxon>Eutheria</taxon>
        <taxon>Euarchontoglires</taxon>
        <taxon>Primates</taxon>
        <taxon>Haplorrhini</taxon>
        <taxon>Catarrhini</taxon>
        <taxon>Hominidae</taxon>
        <taxon>Homo</taxon>
    </lineage>
</organism>
<accession>Q15311</accession>
<accession>D3DUI0</accession>
<reference key="1">
    <citation type="journal article" date="1995" name="J. Biol. Chem.">
        <title>Bridging Ral GTPase to Rho pathways. RLIP76, a Ral effector with CDC42/Rac GTPase-activating protein activity.</title>
        <authorList>
            <person name="Jullien-Flores V."/>
            <person name="Dorseuil O."/>
            <person name="Romero F."/>
            <person name="Letourneur F."/>
            <person name="Saragosti S."/>
            <person name="Berger R."/>
            <person name="Tavitian A."/>
            <person name="Gacon G."/>
            <person name="Camonis J.H."/>
        </authorList>
    </citation>
    <scope>NUCLEOTIDE SEQUENCE [MRNA]</scope>
    <scope>FUNCTION</scope>
    <scope>INTERACTION WITH CDC42; RAC1; RALA AND RALB</scope>
    <scope>REGION</scope>
</reference>
<reference key="2">
    <citation type="journal article" date="2000" name="Biochemistry">
        <title>Novel function of human RLIP76: ATP-dependent transport of glutathione conjugates and doxorubicin.</title>
        <authorList>
            <person name="Awasthi S."/>
            <person name="Cheng J."/>
            <person name="Singhal S.S."/>
            <person name="Saini M.K."/>
            <person name="Pandya U."/>
            <person name="Pikula S."/>
            <person name="Bandorowicz-Pikula J."/>
            <person name="Singh S.V."/>
            <person name="Zimniak P."/>
            <person name="Awasthi Y.C."/>
        </authorList>
    </citation>
    <scope>NUCLEOTIDE SEQUENCE [MRNA]</scope>
    <scope>PROTEIN SEQUENCE OF 2-15; 409-438 AND 472-486</scope>
    <scope>FUNCTION</scope>
    <scope>CATALYTIC ACTIVITY</scope>
    <scope>SUBCELLULAR LOCATION</scope>
    <source>
        <tissue>Bone marrow</tissue>
    </source>
</reference>
<reference key="3">
    <citation type="submission" date="2005-09" db="EMBL/GenBank/DDBJ databases">
        <authorList>
            <person name="Mural R.J."/>
            <person name="Istrail S."/>
            <person name="Sutton G.G."/>
            <person name="Florea L."/>
            <person name="Halpern A.L."/>
            <person name="Mobarry C.M."/>
            <person name="Lippert R."/>
            <person name="Walenz B."/>
            <person name="Shatkay H."/>
            <person name="Dew I."/>
            <person name="Miller J.R."/>
            <person name="Flanigan M.J."/>
            <person name="Edwards N.J."/>
            <person name="Bolanos R."/>
            <person name="Fasulo D."/>
            <person name="Halldorsson B.V."/>
            <person name="Hannenhalli S."/>
            <person name="Turner R."/>
            <person name="Yooseph S."/>
            <person name="Lu F."/>
            <person name="Nusskern D.R."/>
            <person name="Shue B.C."/>
            <person name="Zheng X.H."/>
            <person name="Zhong F."/>
            <person name="Delcher A.L."/>
            <person name="Huson D.H."/>
            <person name="Kravitz S.A."/>
            <person name="Mouchard L."/>
            <person name="Reinert K."/>
            <person name="Remington K.A."/>
            <person name="Clark A.G."/>
            <person name="Waterman M.S."/>
            <person name="Eichler E.E."/>
            <person name="Adams M.D."/>
            <person name="Hunkapiller M.W."/>
            <person name="Myers E.W."/>
            <person name="Venter J.C."/>
        </authorList>
    </citation>
    <scope>NUCLEOTIDE SEQUENCE [LARGE SCALE GENOMIC DNA]</scope>
</reference>
<reference key="4">
    <citation type="journal article" date="2004" name="Genome Res.">
        <title>The status, quality, and expansion of the NIH full-length cDNA project: the Mammalian Gene Collection (MGC).</title>
        <authorList>
            <consortium name="The MGC Project Team"/>
        </authorList>
    </citation>
    <scope>NUCLEOTIDE SEQUENCE [LARGE SCALE MRNA]</scope>
    <source>
        <tissue>Placenta</tissue>
    </source>
</reference>
<reference key="5">
    <citation type="journal article" date="1998" name="Biochemistry">
        <title>ATP-Dependent human erythrocyte glutathione-conjugate transporter. II. Functional reconstitution of transport activity.</title>
        <authorList>
            <person name="Awasthi S."/>
            <person name="Singhal S.S."/>
            <person name="Pikula S."/>
            <person name="Piper J.T."/>
            <person name="Srivastava S.K."/>
            <person name="Torman R.T."/>
            <person name="Bandorowicz-Pikula J."/>
            <person name="Lin J.T."/>
            <person name="Singh S.V."/>
            <person name="Zimniak P."/>
            <person name="Awasthi Y.C."/>
        </authorList>
    </citation>
    <scope>FUNCTION</scope>
    <scope>CATALYTIC ACTIVITY</scope>
</reference>
<reference key="6">
    <citation type="journal article" date="1998" name="J. Biol. Chem.">
        <title>Identification and characterization of a novel protein interacting with Ral-binding protein 1, a putative effector protein of Ral.</title>
        <authorList>
            <person name="Ikeda M."/>
            <person name="Ishida O."/>
            <person name="Hinoi T."/>
            <person name="Kishida S."/>
            <person name="Kikuchi A."/>
        </authorList>
    </citation>
    <scope>INTERACTION WITH REPS2</scope>
    <source>
        <tissue>Brain</tissue>
    </source>
</reference>
<reference key="7">
    <citation type="journal article" date="2000" name="J. Cell Sci.">
        <title>RLIP76, an effector of the GTPase Ral, interacts with the AP2 complex: involvement of the Ral pathway in receptor endocytosis.</title>
        <authorList>
            <person name="Jullien-Flores V."/>
            <person name="Mahe Y."/>
            <person name="Mirey G."/>
            <person name="Leprince C."/>
            <person name="Meunier-Bisceuil B."/>
            <person name="Sorkin A."/>
            <person name="Camonis J.H."/>
        </authorList>
    </citation>
    <scope>FUNCTION</scope>
    <scope>INTERACTION WITH AP2M1</scope>
</reference>
<reference key="8">
    <citation type="journal article" date="2001" name="Biochemistry">
        <title>Functional reassembly of ATP-dependent xenobiotic transport by the N- and C-terminal domains of RLIP76 and identification of ATP binding sequences.</title>
        <authorList>
            <person name="Awasthi S."/>
            <person name="Cheng J.Z."/>
            <person name="Singhal S.S."/>
            <person name="Pandya U."/>
            <person name="Sharma R."/>
            <person name="Singh S.V."/>
            <person name="Zimniak P."/>
            <person name="Awasthi Y.C."/>
        </authorList>
    </citation>
    <scope>FUNCTION</scope>
    <scope>ATP-BINDING</scope>
    <scope>MUTAGENESIS OF LYS-74 AND LYS-425</scope>
    <scope>PROCESSING</scope>
</reference>
<reference key="9">
    <citation type="journal article" date="2001" name="Arch. Biochem. Biophys.">
        <title>RLIP76 is the major ATP-dependent transporter of glutathione-conjugates and doxorubicin in human erythrocytes.</title>
        <authorList>
            <person name="Sharma R."/>
            <person name="Singhal S.S."/>
            <person name="Cheng J."/>
            <person name="Yang Y."/>
            <person name="Sharma A."/>
            <person name="Zimniak P."/>
            <person name="Awasthi S."/>
            <person name="Awasthi Y.C."/>
        </authorList>
    </citation>
    <scope>FUNCTION</scope>
    <scope>CATALYTIC ACTIVITY</scope>
    <scope>SUBCELLULAR LOCATION</scope>
    <scope>TISSUE SPECIFICITY</scope>
</reference>
<reference key="10">
    <citation type="journal article" date="2003" name="J. Biol. Chem.">
        <title>RLIP, an effector of the Ral GTPases, is a platform for Cdk1 to phosphorylate epsin during the switch off of endocytosis in mitosis.</title>
        <authorList>
            <person name="Rosse C."/>
            <person name="L'Hoste S."/>
            <person name="Offner N."/>
            <person name="Picard A."/>
            <person name="Camonis J."/>
        </authorList>
    </citation>
    <scope>FUNCTION</scope>
    <scope>INTERACTION WITH MITOTIC KINASE CYCLIN B-CDK1; EPN1; NUMB AND TFAP2A</scope>
</reference>
<reference key="11">
    <citation type="journal article" date="2004" name="Biochemistry">
        <title>Identification of membrane-anchoring domains of RLIP76 using deletion mutant analyses.</title>
        <authorList>
            <person name="Yadav S."/>
            <person name="Singhal S.S."/>
            <person name="Singhal J."/>
            <person name="Wickramarachchi D."/>
            <person name="Knutson E."/>
            <person name="Albrecht T.B."/>
            <person name="Awasthi Y.C."/>
            <person name="Awasthi S."/>
        </authorList>
    </citation>
    <scope>SUBCELLULAR LOCATION</scope>
    <scope>TOPOLOGY</scope>
    <scope>REGION</scope>
</reference>
<reference key="12">
    <citation type="journal article" date="2006" name="Cell">
        <title>Global, in vivo, and site-specific phosphorylation dynamics in signaling networks.</title>
        <authorList>
            <person name="Olsen J.V."/>
            <person name="Blagoev B."/>
            <person name="Gnad F."/>
            <person name="Macek B."/>
            <person name="Kumar C."/>
            <person name="Mortensen P."/>
            <person name="Mann M."/>
        </authorList>
    </citation>
    <scope>IDENTIFICATION BY MASS SPECTROMETRY [LARGE SCALE ANALYSIS]</scope>
    <source>
        <tissue>Cervix carcinoma</tissue>
    </source>
</reference>
<reference key="13">
    <citation type="journal article" date="2008" name="J. Proteome Res.">
        <title>Combining protein-based IMAC, peptide-based IMAC, and MudPIT for efficient phosphoproteomic analysis.</title>
        <authorList>
            <person name="Cantin G.T."/>
            <person name="Yi W."/>
            <person name="Lu B."/>
            <person name="Park S.K."/>
            <person name="Xu T."/>
            <person name="Lee J.-D."/>
            <person name="Yates J.R. III"/>
        </authorList>
    </citation>
    <scope>PHOSPHORYLATION [LARGE SCALE ANALYSIS] AT SER-62</scope>
    <scope>IDENTIFICATION BY MASS SPECTROMETRY [LARGE SCALE ANALYSIS]</scope>
    <source>
        <tissue>Cervix carcinoma</tissue>
    </source>
</reference>
<reference key="14">
    <citation type="journal article" date="2008" name="J. Proteome Res.">
        <title>Phosphoproteome of resting human platelets.</title>
        <authorList>
            <person name="Zahedi R.P."/>
            <person name="Lewandrowski U."/>
            <person name="Wiesner J."/>
            <person name="Wortelkamp S."/>
            <person name="Moebius J."/>
            <person name="Schuetz C."/>
            <person name="Walter U."/>
            <person name="Gambaryan S."/>
            <person name="Sickmann A."/>
        </authorList>
    </citation>
    <scope>IDENTIFICATION BY MASS SPECTROMETRY [LARGE SCALE ANALYSIS]</scope>
    <source>
        <tissue>Platelet</tissue>
    </source>
</reference>
<reference key="15">
    <citation type="journal article" date="2008" name="Proc. Natl. Acad. Sci. U.S.A.">
        <title>A quantitative atlas of mitotic phosphorylation.</title>
        <authorList>
            <person name="Dephoure N."/>
            <person name="Zhou C."/>
            <person name="Villen J."/>
            <person name="Beausoleil S.A."/>
            <person name="Bakalarski C.E."/>
            <person name="Elledge S.J."/>
            <person name="Gygi S.P."/>
        </authorList>
    </citation>
    <scope>PHOSPHORYLATION [LARGE SCALE ANALYSIS] AT SER-92 AND SER-93</scope>
    <scope>IDENTIFICATION BY MASS SPECTROMETRY [LARGE SCALE ANALYSIS]</scope>
    <source>
        <tissue>Cervix carcinoma</tissue>
    </source>
</reference>
<reference key="16">
    <citation type="journal article" date="2009" name="Anal. Chem.">
        <title>Lys-N and trypsin cover complementary parts of the phosphoproteome in a refined SCX-based approach.</title>
        <authorList>
            <person name="Gauci S."/>
            <person name="Helbig A.O."/>
            <person name="Slijper M."/>
            <person name="Krijgsveld J."/>
            <person name="Heck A.J."/>
            <person name="Mohammed S."/>
        </authorList>
    </citation>
    <scope>ACETYLATION [LARGE SCALE ANALYSIS] AT THR-2</scope>
    <scope>CLEAVAGE OF INITIATOR METHIONINE [LARGE SCALE ANALYSIS]</scope>
    <scope>IDENTIFICATION BY MASS SPECTROMETRY [LARGE SCALE ANALYSIS]</scope>
</reference>
<reference key="17">
    <citation type="journal article" date="2009" name="Mol. Cell. Proteomics">
        <title>Large-scale proteomics analysis of the human kinome.</title>
        <authorList>
            <person name="Oppermann F.S."/>
            <person name="Gnad F."/>
            <person name="Olsen J.V."/>
            <person name="Hornberger R."/>
            <person name="Greff Z."/>
            <person name="Keri G."/>
            <person name="Mann M."/>
            <person name="Daub H."/>
        </authorList>
    </citation>
    <scope>IDENTIFICATION BY MASS SPECTROMETRY [LARGE SCALE ANALYSIS]</scope>
</reference>
<reference key="18">
    <citation type="journal article" date="2009" name="Sci. Signal.">
        <title>Quantitative phosphoproteomic analysis of T cell receptor signaling reveals system-wide modulation of protein-protein interactions.</title>
        <authorList>
            <person name="Mayya V."/>
            <person name="Lundgren D.H."/>
            <person name="Hwang S.-I."/>
            <person name="Rezaul K."/>
            <person name="Wu L."/>
            <person name="Eng J.K."/>
            <person name="Rodionov V."/>
            <person name="Han D.K."/>
        </authorList>
    </citation>
    <scope>PHOSPHORYLATION [LARGE SCALE ANALYSIS] AT SER-92 AND SER-93</scope>
    <scope>IDENTIFICATION BY MASS SPECTROMETRY [LARGE SCALE ANALYSIS]</scope>
    <source>
        <tissue>Leukemic T-cell</tissue>
    </source>
</reference>
<reference key="19">
    <citation type="journal article" date="2011" name="BMC Syst. Biol.">
        <title>Initial characterization of the human central proteome.</title>
        <authorList>
            <person name="Burkard T.R."/>
            <person name="Planyavsky M."/>
            <person name="Kaupe I."/>
            <person name="Breitwieser F.P."/>
            <person name="Buerckstuemmer T."/>
            <person name="Bennett K.L."/>
            <person name="Superti-Furga G."/>
            <person name="Colinge J."/>
        </authorList>
    </citation>
    <scope>IDENTIFICATION BY MASS SPECTROMETRY [LARGE SCALE ANALYSIS]</scope>
</reference>
<reference key="20">
    <citation type="journal article" date="2011" name="Nat. Cell Biol.">
        <title>RALA and RALBP1 regulate mitochondrial fission at mitosis.</title>
        <authorList>
            <person name="Kashatus D.F."/>
            <person name="Lim K.H."/>
            <person name="Brady D.C."/>
            <person name="Pershing N.L."/>
            <person name="Cox A.D."/>
            <person name="Counter C.M."/>
        </authorList>
    </citation>
    <scope>FUNCTION</scope>
    <scope>INTERACTION WITH DNM1L AND RALA</scope>
    <scope>SUBCELLULAR LOCATION</scope>
</reference>
<reference key="21">
    <citation type="journal article" date="2011" name="Sci. Signal.">
        <title>System-wide temporal characterization of the proteome and phosphoproteome of human embryonic stem cell differentiation.</title>
        <authorList>
            <person name="Rigbolt K.T."/>
            <person name="Prokhorova T.A."/>
            <person name="Akimov V."/>
            <person name="Henningsen J."/>
            <person name="Johansen P.T."/>
            <person name="Kratchmarova I."/>
            <person name="Kassem M."/>
            <person name="Mann M."/>
            <person name="Olsen J.V."/>
            <person name="Blagoev B."/>
        </authorList>
    </citation>
    <scope>PHOSPHORYLATION [LARGE SCALE ANALYSIS] AT SER-463</scope>
    <scope>IDENTIFICATION BY MASS SPECTROMETRY [LARGE SCALE ANALYSIS]</scope>
</reference>
<reference key="22">
    <citation type="journal article" date="2012" name="FASEB J.">
        <title>Dynamics of the subcellular localization of RalBP1/RLIP through the cell cycle: the role of targeting signals and of protein-protein interactions.</title>
        <authorList>
            <person name="Fillatre J."/>
            <person name="Delacour D."/>
            <person name="Van Hove L."/>
            <person name="Bagarre T."/>
            <person name="Houssin N."/>
            <person name="Soulika M."/>
            <person name="Veitia R.A."/>
            <person name="Moreau J."/>
        </authorList>
    </citation>
    <scope>SUBCELLULAR LOCATION</scope>
</reference>
<reference key="23">
    <citation type="journal article" date="2013" name="J. Proteome Res.">
        <title>Toward a comprehensive characterization of a human cancer cell phosphoproteome.</title>
        <authorList>
            <person name="Zhou H."/>
            <person name="Di Palma S."/>
            <person name="Preisinger C."/>
            <person name="Peng M."/>
            <person name="Polat A.N."/>
            <person name="Heck A.J."/>
            <person name="Mohammed S."/>
        </authorList>
    </citation>
    <scope>PHOSPHORYLATION [LARGE SCALE ANALYSIS] AT SER-29; SER-30; SER-34; SER-62; SER-92; SER-93; SER-461 AND SER-463</scope>
    <scope>IDENTIFICATION BY MASS SPECTROMETRY [LARGE SCALE ANALYSIS]</scope>
    <source>
        <tissue>Cervix carcinoma</tissue>
        <tissue>Erythroleukemia</tissue>
    </source>
</reference>
<reference key="24">
    <citation type="journal article" date="2014" name="J. Proteomics">
        <title>An enzyme assisted RP-RPLC approach for in-depth analysis of human liver phosphoproteome.</title>
        <authorList>
            <person name="Bian Y."/>
            <person name="Song C."/>
            <person name="Cheng K."/>
            <person name="Dong M."/>
            <person name="Wang F."/>
            <person name="Huang J."/>
            <person name="Sun D."/>
            <person name="Wang L."/>
            <person name="Ye M."/>
            <person name="Zou H."/>
        </authorList>
    </citation>
    <scope>PHOSPHORYLATION [LARGE SCALE ANALYSIS] AT THR-44; SER-48; SER-62; SER-92; SER-93; SER-463 AND SER-645</scope>
    <scope>IDENTIFICATION BY MASS SPECTROMETRY [LARGE SCALE ANALYSIS]</scope>
    <source>
        <tissue>Liver</tissue>
    </source>
</reference>
<reference evidence="28 29" key="25">
    <citation type="journal article" date="2010" name="Structure">
        <title>The RalB-RLIP76 complex reveals a novel mode of ral-effector interaction.</title>
        <authorList>
            <person name="Fenwick R.B."/>
            <person name="Campbell L.J."/>
            <person name="Rajasekar K."/>
            <person name="Prasannan S."/>
            <person name="Nietlispach D."/>
            <person name="Camonis J."/>
            <person name="Owen D."/>
            <person name="Mott H.R."/>
        </authorList>
    </citation>
    <scope>STRUCTURE BY NMR OF 393-446 IN COMPLEX WITH RALB</scope>
    <scope>INTERACTION WITH RALB</scope>
    <scope>REGION</scope>
</reference>
<reference evidence="30" key="26">
    <citation type="journal article" date="2013" name="Structure">
        <title>The structure of the RLIP76 RhoGAP-Ral binding domain dyad: fixed position of the domains leads to dual engagement of small G proteins at the membrane.</title>
        <authorList>
            <person name="Rajasekar K.V."/>
            <person name="Campbell L.J."/>
            <person name="Nietlispach D."/>
            <person name="Owen D."/>
            <person name="Mott H.R."/>
        </authorList>
    </citation>
    <scope>STRUCTURE BY NMR OF 184-446</scope>
</reference>
<keyword id="KW-0002">3D-structure</keyword>
<keyword id="KW-0007">Acetylation</keyword>
<keyword id="KW-0067">ATP-binding</keyword>
<keyword id="KW-1003">Cell membrane</keyword>
<keyword id="KW-0963">Cytoplasm</keyword>
<keyword id="KW-0206">Cytoskeleton</keyword>
<keyword id="KW-0903">Direct protein sequencing</keyword>
<keyword id="KW-0343">GTPase activation</keyword>
<keyword id="KW-0472">Membrane</keyword>
<keyword id="KW-0496">Mitochondrion</keyword>
<keyword id="KW-0547">Nucleotide-binding</keyword>
<keyword id="KW-0539">Nucleus</keyword>
<keyword id="KW-0597">Phosphoprotein</keyword>
<keyword id="KW-1267">Proteomics identification</keyword>
<keyword id="KW-1185">Reference proteome</keyword>
<keyword id="KW-1278">Translocase</keyword>
<keyword id="KW-0813">Transport</keyword>
<protein>
    <recommendedName>
        <fullName evidence="2">RalA-binding protein 1</fullName>
        <shortName evidence="2">RalBP1</shortName>
    </recommendedName>
    <alternativeName>
        <fullName evidence="20">76 kDa Ral-interacting protein</fullName>
    </alternativeName>
    <alternativeName>
        <fullName evidence="18 21">Dinitrophenyl S-glutathione ATPase</fullName>
        <shortName evidence="18 21">DNP-SG ATPase</shortName>
        <ecNumber evidence="7 9 17">7.6.2.2</ecNumber>
        <ecNumber evidence="7">7.6.2.3</ecNumber>
    </alternativeName>
    <alternativeName>
        <fullName evidence="20">Ral-interacting protein 1</fullName>
    </alternativeName>
</protein>
<dbReference type="EC" id="7.6.2.2" evidence="7 9 17"/>
<dbReference type="EC" id="7.6.2.3" evidence="7"/>
<dbReference type="EMBL" id="L42542">
    <property type="protein sequence ID" value="AAB00103.1"/>
    <property type="molecule type" value="mRNA"/>
</dbReference>
<dbReference type="EMBL" id="CH471113">
    <property type="protein sequence ID" value="EAX01601.1"/>
    <property type="molecule type" value="Genomic_DNA"/>
</dbReference>
<dbReference type="EMBL" id="CH471113">
    <property type="protein sequence ID" value="EAX01602.1"/>
    <property type="molecule type" value="Genomic_DNA"/>
</dbReference>
<dbReference type="EMBL" id="CH471113">
    <property type="protein sequence ID" value="EAX01604.1"/>
    <property type="molecule type" value="Genomic_DNA"/>
</dbReference>
<dbReference type="EMBL" id="CH471113">
    <property type="protein sequence ID" value="EAX01605.1"/>
    <property type="molecule type" value="Genomic_DNA"/>
</dbReference>
<dbReference type="EMBL" id="BC013126">
    <property type="protein sequence ID" value="AAH13126.1"/>
    <property type="molecule type" value="mRNA"/>
</dbReference>
<dbReference type="CCDS" id="CCDS11845.1"/>
<dbReference type="PIR" id="F59435">
    <property type="entry name" value="F59435"/>
</dbReference>
<dbReference type="RefSeq" id="NP_006779.1">
    <property type="nucleotide sequence ID" value="NM_006788.4"/>
</dbReference>
<dbReference type="RefSeq" id="XP_047293234.1">
    <property type="nucleotide sequence ID" value="XM_047437278.1"/>
</dbReference>
<dbReference type="RefSeq" id="XP_047293235.1">
    <property type="nucleotide sequence ID" value="XM_047437279.1"/>
</dbReference>
<dbReference type="RefSeq" id="XP_047293236.1">
    <property type="nucleotide sequence ID" value="XM_047437280.1"/>
</dbReference>
<dbReference type="RefSeq" id="XP_047293237.1">
    <property type="nucleotide sequence ID" value="XM_047437281.1"/>
</dbReference>
<dbReference type="RefSeq" id="XP_047293238.1">
    <property type="nucleotide sequence ID" value="XM_047437282.1"/>
</dbReference>
<dbReference type="RefSeq" id="XP_047293239.1">
    <property type="nucleotide sequence ID" value="XM_047437283.1"/>
</dbReference>
<dbReference type="RefSeq" id="XP_047293240.1">
    <property type="nucleotide sequence ID" value="XM_047437284.1"/>
</dbReference>
<dbReference type="RefSeq" id="XP_054174134.1">
    <property type="nucleotide sequence ID" value="XM_054318159.1"/>
</dbReference>
<dbReference type="RefSeq" id="XP_054174135.1">
    <property type="nucleotide sequence ID" value="XM_054318160.1"/>
</dbReference>
<dbReference type="RefSeq" id="XP_054174136.1">
    <property type="nucleotide sequence ID" value="XM_054318161.1"/>
</dbReference>
<dbReference type="RefSeq" id="XP_054174137.1">
    <property type="nucleotide sequence ID" value="XM_054318162.1"/>
</dbReference>
<dbReference type="PDB" id="2KWH">
    <property type="method" value="NMR"/>
    <property type="chains" value="A=393-446"/>
</dbReference>
<dbReference type="PDB" id="2KWI">
    <property type="method" value="NMR"/>
    <property type="chains" value="B=393-446"/>
</dbReference>
<dbReference type="PDB" id="2MBG">
    <property type="method" value="NMR"/>
    <property type="chains" value="A=184-446"/>
</dbReference>
<dbReference type="PDB" id="6ZQT">
    <property type="method" value="X-ray"/>
    <property type="resolution" value="1.51 A"/>
    <property type="chains" value="C/D=393-446"/>
</dbReference>
<dbReference type="PDB" id="6ZRN">
    <property type="method" value="X-ray"/>
    <property type="resolution" value="1.48 A"/>
    <property type="chains" value="C/D=393-446"/>
</dbReference>
<dbReference type="PDBsum" id="2KWH"/>
<dbReference type="PDBsum" id="2KWI"/>
<dbReference type="PDBsum" id="2MBG"/>
<dbReference type="PDBsum" id="6ZQT"/>
<dbReference type="PDBsum" id="6ZRN"/>
<dbReference type="BMRB" id="Q15311"/>
<dbReference type="SMR" id="Q15311"/>
<dbReference type="BioGRID" id="116131">
    <property type="interactions" value="191"/>
</dbReference>
<dbReference type="CORUM" id="Q15311"/>
<dbReference type="FunCoup" id="Q15311">
    <property type="interactions" value="3298"/>
</dbReference>
<dbReference type="IntAct" id="Q15311">
    <property type="interactions" value="156"/>
</dbReference>
<dbReference type="MINT" id="Q15311"/>
<dbReference type="STRING" id="9606.ENSP00000372924"/>
<dbReference type="DrugBank" id="DB00564">
    <property type="generic name" value="Carbamazepine"/>
</dbReference>
<dbReference type="DrugBank" id="DB00997">
    <property type="generic name" value="Doxorubicin"/>
</dbReference>
<dbReference type="DrugBank" id="DB00398">
    <property type="generic name" value="Sorafenib"/>
</dbReference>
<dbReference type="DrugBank" id="DB00541">
    <property type="generic name" value="Vincristine"/>
</dbReference>
<dbReference type="TCDB" id="9.A.1.1.1">
    <property type="family name" value="the non abc multidrug exporter (n-mde) family"/>
</dbReference>
<dbReference type="iPTMnet" id="Q15311"/>
<dbReference type="PhosphoSitePlus" id="Q15311"/>
<dbReference type="BioMuta" id="RALBP1"/>
<dbReference type="DMDM" id="34098413"/>
<dbReference type="CPTAC" id="CPTAC-1747"/>
<dbReference type="CPTAC" id="CPTAC-1748"/>
<dbReference type="jPOST" id="Q15311"/>
<dbReference type="MassIVE" id="Q15311"/>
<dbReference type="PaxDb" id="9606-ENSP00000019317"/>
<dbReference type="PeptideAtlas" id="Q15311"/>
<dbReference type="ProteomicsDB" id="60526"/>
<dbReference type="Pumba" id="Q15311"/>
<dbReference type="Antibodypedia" id="21929">
    <property type="antibodies" value="527 antibodies from 37 providers"/>
</dbReference>
<dbReference type="DNASU" id="10928"/>
<dbReference type="Ensembl" id="ENST00000019317.8">
    <property type="protein sequence ID" value="ENSP00000019317.4"/>
    <property type="gene ID" value="ENSG00000017797.13"/>
</dbReference>
<dbReference type="Ensembl" id="ENST00000383432.8">
    <property type="protein sequence ID" value="ENSP00000372924.3"/>
    <property type="gene ID" value="ENSG00000017797.13"/>
</dbReference>
<dbReference type="GeneID" id="10928"/>
<dbReference type="KEGG" id="hsa:10928"/>
<dbReference type="MANE-Select" id="ENST00000383432.8">
    <property type="protein sequence ID" value="ENSP00000372924.3"/>
    <property type="RefSeq nucleotide sequence ID" value="NM_006788.4"/>
    <property type="RefSeq protein sequence ID" value="NP_006779.1"/>
</dbReference>
<dbReference type="UCSC" id="uc002kob.4">
    <property type="organism name" value="human"/>
</dbReference>
<dbReference type="AGR" id="HGNC:9841"/>
<dbReference type="CTD" id="10928"/>
<dbReference type="DisGeNET" id="10928"/>
<dbReference type="GeneCards" id="RALBP1"/>
<dbReference type="HGNC" id="HGNC:9841">
    <property type="gene designation" value="RALBP1"/>
</dbReference>
<dbReference type="HPA" id="ENSG00000017797">
    <property type="expression patterns" value="Low tissue specificity"/>
</dbReference>
<dbReference type="MIM" id="605801">
    <property type="type" value="gene"/>
</dbReference>
<dbReference type="neXtProt" id="NX_Q15311"/>
<dbReference type="OpenTargets" id="ENSG00000017797"/>
<dbReference type="PharmGKB" id="PA34199"/>
<dbReference type="VEuPathDB" id="HostDB:ENSG00000017797"/>
<dbReference type="eggNOG" id="KOG4370">
    <property type="taxonomic scope" value="Eukaryota"/>
</dbReference>
<dbReference type="GeneTree" id="ENSGT00940000154639"/>
<dbReference type="HOGENOM" id="CLU_028068_1_0_1"/>
<dbReference type="InParanoid" id="Q15311"/>
<dbReference type="OMA" id="LMHYKRL"/>
<dbReference type="OrthoDB" id="10033734at2759"/>
<dbReference type="PAN-GO" id="Q15311">
    <property type="GO annotations" value="5 GO annotations based on evolutionary models"/>
</dbReference>
<dbReference type="PhylomeDB" id="Q15311"/>
<dbReference type="TreeFam" id="TF315411"/>
<dbReference type="BRENDA" id="7.6.2.3">
    <property type="organism ID" value="2681"/>
</dbReference>
<dbReference type="PathwayCommons" id="Q15311"/>
<dbReference type="Reactome" id="R-HSA-9013148">
    <property type="pathway name" value="CDC42 GTPase cycle"/>
</dbReference>
<dbReference type="Reactome" id="R-HSA-9013149">
    <property type="pathway name" value="RAC1 GTPase cycle"/>
</dbReference>
<dbReference type="SignaLink" id="Q15311"/>
<dbReference type="SIGNOR" id="Q15311"/>
<dbReference type="BioGRID-ORCS" id="10928">
    <property type="hits" value="74 hits in 1149 CRISPR screens"/>
</dbReference>
<dbReference type="ChiTaRS" id="RALBP1">
    <property type="organism name" value="human"/>
</dbReference>
<dbReference type="EvolutionaryTrace" id="Q15311"/>
<dbReference type="GeneWiki" id="RALBP1"/>
<dbReference type="GenomeRNAi" id="10928"/>
<dbReference type="Pharos" id="Q15311">
    <property type="development level" value="Tbio"/>
</dbReference>
<dbReference type="PRO" id="PR:Q15311"/>
<dbReference type="Proteomes" id="UP000005640">
    <property type="component" value="Chromosome 18"/>
</dbReference>
<dbReference type="RNAct" id="Q15311">
    <property type="molecule type" value="protein"/>
</dbReference>
<dbReference type="Bgee" id="ENSG00000017797">
    <property type="expression patterns" value="Expressed in renal medulla and 216 other cell types or tissues"/>
</dbReference>
<dbReference type="ExpressionAtlas" id="Q15311">
    <property type="expression patterns" value="baseline and differential"/>
</dbReference>
<dbReference type="GO" id="GO:0005829">
    <property type="term" value="C:cytosol"/>
    <property type="evidence" value="ECO:0000304"/>
    <property type="project" value="Reactome"/>
</dbReference>
<dbReference type="GO" id="GO:0016020">
    <property type="term" value="C:membrane"/>
    <property type="evidence" value="ECO:0000314"/>
    <property type="project" value="UniProtKB"/>
</dbReference>
<dbReference type="GO" id="GO:0005739">
    <property type="term" value="C:mitochondrion"/>
    <property type="evidence" value="ECO:0000314"/>
    <property type="project" value="UniProtKB"/>
</dbReference>
<dbReference type="GO" id="GO:0016604">
    <property type="term" value="C:nuclear body"/>
    <property type="evidence" value="ECO:0000314"/>
    <property type="project" value="HPA"/>
</dbReference>
<dbReference type="GO" id="GO:0005654">
    <property type="term" value="C:nucleoplasm"/>
    <property type="evidence" value="ECO:0000314"/>
    <property type="project" value="HPA"/>
</dbReference>
<dbReference type="GO" id="GO:0005886">
    <property type="term" value="C:plasma membrane"/>
    <property type="evidence" value="ECO:0000314"/>
    <property type="project" value="HPA"/>
</dbReference>
<dbReference type="GO" id="GO:0000922">
    <property type="term" value="C:spindle pole"/>
    <property type="evidence" value="ECO:0007669"/>
    <property type="project" value="UniProtKB-SubCell"/>
</dbReference>
<dbReference type="GO" id="GO:0015431">
    <property type="term" value="F:ABC-type glutathione S-conjugate transporter activity"/>
    <property type="evidence" value="ECO:0007669"/>
    <property type="project" value="UniProtKB-EC"/>
</dbReference>
<dbReference type="GO" id="GO:0008559">
    <property type="term" value="F:ABC-type xenobiotic transporter activity"/>
    <property type="evidence" value="ECO:0007669"/>
    <property type="project" value="UniProtKB-EC"/>
</dbReference>
<dbReference type="GO" id="GO:0005524">
    <property type="term" value="F:ATP binding"/>
    <property type="evidence" value="ECO:0007669"/>
    <property type="project" value="UniProtKB-KW"/>
</dbReference>
<dbReference type="GO" id="GO:0042626">
    <property type="term" value="F:ATPase-coupled transmembrane transporter activity"/>
    <property type="evidence" value="ECO:0000314"/>
    <property type="project" value="UniProtKB"/>
</dbReference>
<dbReference type="GO" id="GO:0005096">
    <property type="term" value="F:GTPase activator activity"/>
    <property type="evidence" value="ECO:0000314"/>
    <property type="project" value="UniProtKB"/>
</dbReference>
<dbReference type="GO" id="GO:0031267">
    <property type="term" value="F:small GTPase binding"/>
    <property type="evidence" value="ECO:0000353"/>
    <property type="project" value="UniProtKB"/>
</dbReference>
<dbReference type="GO" id="GO:0022857">
    <property type="term" value="F:transmembrane transporter activity"/>
    <property type="evidence" value="ECO:0000314"/>
    <property type="project" value="UniProtKB"/>
</dbReference>
<dbReference type="GO" id="GO:0042910">
    <property type="term" value="F:xenobiotic transmembrane transporter activity"/>
    <property type="evidence" value="ECO:0000314"/>
    <property type="project" value="UniProtKB"/>
</dbReference>
<dbReference type="GO" id="GO:0006935">
    <property type="term" value="P:chemotaxis"/>
    <property type="evidence" value="ECO:0000304"/>
    <property type="project" value="ProtInc"/>
</dbReference>
<dbReference type="GO" id="GO:1900753">
    <property type="term" value="P:doxorubicin transport"/>
    <property type="evidence" value="ECO:0000314"/>
    <property type="project" value="UniProtKB"/>
</dbReference>
<dbReference type="GO" id="GO:0043547">
    <property type="term" value="P:positive regulation of GTPase activity"/>
    <property type="evidence" value="ECO:0000314"/>
    <property type="project" value="UniProtKB"/>
</dbReference>
<dbReference type="GO" id="GO:0090141">
    <property type="term" value="P:positive regulation of mitochondrial fission"/>
    <property type="evidence" value="ECO:0000315"/>
    <property type="project" value="UniProtKB"/>
</dbReference>
<dbReference type="GO" id="GO:0001934">
    <property type="term" value="P:positive regulation of protein phosphorylation"/>
    <property type="evidence" value="ECO:0000315"/>
    <property type="project" value="UniProtKB"/>
</dbReference>
<dbReference type="GO" id="GO:0006898">
    <property type="term" value="P:receptor-mediated endocytosis"/>
    <property type="evidence" value="ECO:0000318"/>
    <property type="project" value="GO_Central"/>
</dbReference>
<dbReference type="GO" id="GO:0032489">
    <property type="term" value="P:regulation of Cdc42 protein signal transduction"/>
    <property type="evidence" value="ECO:0000250"/>
    <property type="project" value="UniProtKB"/>
</dbReference>
<dbReference type="GO" id="GO:0043087">
    <property type="term" value="P:regulation of GTPase activity"/>
    <property type="evidence" value="ECO:0000314"/>
    <property type="project" value="UniProtKB"/>
</dbReference>
<dbReference type="GO" id="GO:0051056">
    <property type="term" value="P:regulation of small GTPase mediated signal transduction"/>
    <property type="evidence" value="ECO:0000304"/>
    <property type="project" value="Reactome"/>
</dbReference>
<dbReference type="GO" id="GO:0007264">
    <property type="term" value="P:small GTPase-mediated signal transduction"/>
    <property type="evidence" value="ECO:0000353"/>
    <property type="project" value="UniProtKB"/>
</dbReference>
<dbReference type="GO" id="GO:0055085">
    <property type="term" value="P:transmembrane transport"/>
    <property type="evidence" value="ECO:0000314"/>
    <property type="project" value="UniProtKB"/>
</dbReference>
<dbReference type="GO" id="GO:1990961">
    <property type="term" value="P:xenobiotic detoxification by transmembrane export across the plasma membrane"/>
    <property type="evidence" value="ECO:0000314"/>
    <property type="project" value="UniProtKB"/>
</dbReference>
<dbReference type="CDD" id="cd04381">
    <property type="entry name" value="RhoGap_RalBP1"/>
    <property type="match status" value="1"/>
</dbReference>
<dbReference type="FunFam" id="1.10.555.10:FF:000027">
    <property type="entry name" value="RalA-binding protein 1"/>
    <property type="match status" value="1"/>
</dbReference>
<dbReference type="FunFam" id="1.20.58.90:FF:000001">
    <property type="entry name" value="ralA-binding protein 1"/>
    <property type="match status" value="1"/>
</dbReference>
<dbReference type="Gene3D" id="1.20.58.90">
    <property type="match status" value="1"/>
</dbReference>
<dbReference type="Gene3D" id="1.10.555.10">
    <property type="entry name" value="Rho GTPase activation protein"/>
    <property type="match status" value="1"/>
</dbReference>
<dbReference type="InterPro" id="IPR039767">
    <property type="entry name" value="RALBP1"/>
</dbReference>
<dbReference type="InterPro" id="IPR049041">
    <property type="entry name" value="RalBP1-like_Ral-bd"/>
</dbReference>
<dbReference type="InterPro" id="IPR008936">
    <property type="entry name" value="Rho_GTPase_activation_prot"/>
</dbReference>
<dbReference type="InterPro" id="IPR000198">
    <property type="entry name" value="RhoGAP_dom"/>
</dbReference>
<dbReference type="PANTHER" id="PTHR12783">
    <property type="entry name" value="RALA BINDING PROTEIN 1 RALBP1"/>
    <property type="match status" value="1"/>
</dbReference>
<dbReference type="PANTHER" id="PTHR12783:SF5">
    <property type="entry name" value="RALA-BINDING PROTEIN 1"/>
    <property type="match status" value="1"/>
</dbReference>
<dbReference type="Pfam" id="PF00620">
    <property type="entry name" value="RhoGAP"/>
    <property type="match status" value="1"/>
</dbReference>
<dbReference type="Pfam" id="PF20924">
    <property type="entry name" value="RLIP76_Ral-bd"/>
    <property type="match status" value="1"/>
</dbReference>
<dbReference type="SMART" id="SM00324">
    <property type="entry name" value="RhoGAP"/>
    <property type="match status" value="1"/>
</dbReference>
<dbReference type="SUPFAM" id="SSF48350">
    <property type="entry name" value="GTPase activation domain, GAP"/>
    <property type="match status" value="1"/>
</dbReference>
<dbReference type="PROSITE" id="PS50238">
    <property type="entry name" value="RHOGAP"/>
    <property type="match status" value="1"/>
</dbReference>
<comment type="function">
    <text evidence="6 10 13 15">Multifunctional protein that functions as a downstream effector of RALA and RALB (PubMed:7673236). As a GTPase-activating protein/GAP can inactivate CDC42 and RAC1 by stimulating their GTPase activity (PubMed:7673236). As part of the Ral signaling pathway, may also regulate ligand-dependent EGF and insulin receptors-mediated endocytosis (PubMed:10910768, PubMed:12775724). During mitosis, may act as a scaffold protein in the phosphorylation of EPSIN/EPN1 by the mitotic kinase cyclin B-CDK1, preventing endocytosis during that phase of the cell cycle (PubMed:12775724). During mitosis, also controls mitochondrial fission as an effector of RALA (PubMed:21822277). Recruited to mitochondrion by RALA, acts as a scaffold to foster the mitotic kinase cyclin B-CDK1-mediated phosphorylation and activation of DNM1L (PubMed:21822277).</text>
</comment>
<comment type="function">
    <text evidence="7 8 9 17">Could also function as a primary ATP-dependent active transporter for glutathione conjugates of electrophiles. May also actively catalyze the efflux of a wide range of substrates including xenobiotics like doxorubicin (DOX) contributing to cell multidrug resistance.</text>
</comment>
<comment type="catalytic activity">
    <reaction evidence="7 9 17">
        <text>an S-substituted glutathione(in) + ATP + H2O = an S-substituted glutathione(out) + ADP + phosphate + H(+)</text>
        <dbReference type="Rhea" id="RHEA:19121"/>
        <dbReference type="ChEBI" id="CHEBI:15377"/>
        <dbReference type="ChEBI" id="CHEBI:15378"/>
        <dbReference type="ChEBI" id="CHEBI:30616"/>
        <dbReference type="ChEBI" id="CHEBI:43474"/>
        <dbReference type="ChEBI" id="CHEBI:90779"/>
        <dbReference type="ChEBI" id="CHEBI:456216"/>
        <dbReference type="EC" id="7.6.2.3"/>
    </reaction>
    <physiologicalReaction direction="left-to-right" evidence="22">
        <dbReference type="Rhea" id="RHEA:19122"/>
    </physiologicalReaction>
</comment>
<comment type="catalytic activity">
    <reaction evidence="7 9">
        <text>ATP + H2O + xenobioticSide 1 = ADP + phosphate + xenobioticSide 2.</text>
        <dbReference type="EC" id="7.6.2.2"/>
    </reaction>
</comment>
<comment type="catalytic activity">
    <reaction evidence="9">
        <text>leukotriene C4(in) + ATP + H2O = leukotriene C4(out) + ADP + phosphate + H(+)</text>
        <dbReference type="Rhea" id="RHEA:38963"/>
        <dbReference type="ChEBI" id="CHEBI:15377"/>
        <dbReference type="ChEBI" id="CHEBI:15378"/>
        <dbReference type="ChEBI" id="CHEBI:30616"/>
        <dbReference type="ChEBI" id="CHEBI:43474"/>
        <dbReference type="ChEBI" id="CHEBI:57973"/>
        <dbReference type="ChEBI" id="CHEBI:456216"/>
    </reaction>
    <physiologicalReaction direction="left-to-right" evidence="24">
        <dbReference type="Rhea" id="RHEA:38964"/>
    </physiologicalReaction>
</comment>
<comment type="subunit">
    <text evidence="1 6 10 12 13 15 16 26">Interacts with the GTP-bound form of RALA (via effector domain); during mitosis, recruits RALBP1 to the mitochondrion where it promotes DNM1L phosphorylation and mitochondrial fission (PubMed:21822277, PubMed:7673236). Interacts with DNM1L; mediates its mitotic kinase cyclin B-CDK1-mediated phosphorylation during mitosis to promote mitochondrial fission (PubMed:21822277). Interacts with the mitotic kinase cyclin B-CDK1 during mitosis (PubMed:12775724, PubMed:21822277). Interacts with the GTP-bound form of RALB (via effector domain) (PubMed:20696399, PubMed:7673236). Interacts with REPS1; the interaction is direct and does not affect RALA-binding nor GTPase activator activity of RALBP1 (By similarity). Interacts with REPS2; the interaction is direct and does not affect RALA-binding nor GTPase activator activity of RALBP1 (PubMed:9422736). Interacts with EPN1, NUMB and TFAP2A during interphase and mitosis (PubMed:12775724). Interacts with AP2M1; as part of the AP2 complex (PubMed:10910768). Interacts with CDC42 (Probable). Interacts with RAC1 (PubMed:7673236).</text>
</comment>
<comment type="interaction">
    <interactant intactId="EBI-749285">
        <id>Q15311</id>
    </interactant>
    <interactant intactId="EBI-746752">
        <id>Q9Y2J4</id>
        <label>AMOTL2</label>
    </interactant>
    <organismsDiffer>false</organismsDiffer>
    <experiments>3</experiments>
</comment>
<comment type="interaction">
    <interactant intactId="EBI-749285">
        <id>Q15311</id>
    </interactant>
    <interactant intactId="EBI-10187270">
        <id>Q9Y2J4-4</id>
        <label>AMOTL2</label>
    </interactant>
    <organismsDiffer>false</organismsDiffer>
    <experiments>3</experiments>
</comment>
<comment type="interaction">
    <interactant intactId="EBI-749285">
        <id>Q15311</id>
    </interactant>
    <interactant intactId="EBI-747505">
        <id>Q8TAB5</id>
        <label>C1orf216</label>
    </interactant>
    <organismsDiffer>false</organismsDiffer>
    <experiments>6</experiments>
</comment>
<comment type="interaction">
    <interactant intactId="EBI-749285">
        <id>Q15311</id>
    </interactant>
    <interactant intactId="EBI-947308">
        <id>Q9Y3M2</id>
        <label>CBY1</label>
    </interactant>
    <organismsDiffer>false</organismsDiffer>
    <experiments>4</experiments>
</comment>
<comment type="interaction">
    <interactant intactId="EBI-749285">
        <id>Q15311</id>
    </interactant>
    <interactant intactId="EBI-10961312">
        <id>Q8IYE1</id>
        <label>CCDC13</label>
    </interactant>
    <organismsDiffer>false</organismsDiffer>
    <experiments>3</experiments>
</comment>
<comment type="interaction">
    <interactant intactId="EBI-749285">
        <id>Q15311</id>
    </interactant>
    <interactant intactId="EBI-1045350">
        <id>Q16204</id>
        <label>CCDC6</label>
    </interactant>
    <organismsDiffer>false</organismsDiffer>
    <experiments>10</experiments>
</comment>
<comment type="interaction">
    <interactant intactId="EBI-749285">
        <id>Q15311</id>
    </interactant>
    <interactant intactId="EBI-347573">
        <id>A6NC98</id>
        <label>CCDC88B</label>
    </interactant>
    <organismsDiffer>false</organismsDiffer>
    <experiments>3</experiments>
</comment>
<comment type="interaction">
    <interactant intactId="EBI-749285">
        <id>Q15311</id>
    </interactant>
    <interactant intactId="EBI-10175300">
        <id>Q8TD31-3</id>
        <label>CCHCR1</label>
    </interactant>
    <organismsDiffer>false</organismsDiffer>
    <experiments>3</experiments>
</comment>
<comment type="interaction">
    <interactant intactId="EBI-749285">
        <id>Q15311</id>
    </interactant>
    <interactant intactId="EBI-3913209">
        <id>P78556</id>
        <label>CCL20</label>
    </interactant>
    <organismsDiffer>false</organismsDiffer>
    <experiments>2</experiments>
</comment>
<comment type="interaction">
    <interactant intactId="EBI-749285">
        <id>Q15311</id>
    </interactant>
    <interactant intactId="EBI-308614">
        <id>Q86XR8</id>
        <label>CEP57</label>
    </interactant>
    <organismsDiffer>false</organismsDiffer>
    <experiments>4</experiments>
</comment>
<comment type="interaction">
    <interactant intactId="EBI-749285">
        <id>Q15311</id>
    </interactant>
    <interactant intactId="EBI-25837549">
        <id>P28329-3</id>
        <label>CHAT</label>
    </interactant>
    <organismsDiffer>false</organismsDiffer>
    <experiments>3</experiments>
</comment>
<comment type="interaction">
    <interactant intactId="EBI-749285">
        <id>Q15311</id>
    </interactant>
    <interactant intactId="EBI-632965">
        <id>Q9NS37</id>
        <label>CREBZF</label>
    </interactant>
    <organismsDiffer>false</organismsDiffer>
    <experiments>5</experiments>
</comment>
<comment type="interaction">
    <interactant intactId="EBI-749285">
        <id>Q15311</id>
    </interactant>
    <interactant intactId="EBI-357481">
        <id>Q12959</id>
        <label>DLG1</label>
    </interactant>
    <organismsDiffer>false</organismsDiffer>
    <experiments>5</experiments>
</comment>
<comment type="interaction">
    <interactant intactId="EBI-749285">
        <id>Q15311</id>
    </interactant>
    <interactant intactId="EBI-80389">
        <id>P78352</id>
        <label>DLG4</label>
    </interactant>
    <organismsDiffer>false</organismsDiffer>
    <experiments>2</experiments>
</comment>
<comment type="interaction">
    <interactant intactId="EBI-749285">
        <id>Q15311</id>
    </interactant>
    <interactant intactId="EBI-348399">
        <id>P22607</id>
        <label>FGFR3</label>
    </interactant>
    <organismsDiffer>false</organismsDiffer>
    <experiments>3</experiments>
</comment>
<comment type="interaction">
    <interactant intactId="EBI-749285">
        <id>Q15311</id>
    </interactant>
    <interactant intactId="EBI-1052570">
        <id>O95995</id>
        <label>GAS8</label>
    </interactant>
    <organismsDiffer>false</organismsDiffer>
    <experiments>3</experiments>
</comment>
<comment type="interaction">
    <interactant intactId="EBI-749285">
        <id>Q15311</id>
    </interactant>
    <interactant intactId="EBI-713355">
        <id>Q13227</id>
        <label>GPS2</label>
    </interactant>
    <organismsDiffer>false</organismsDiffer>
    <experiments>14</experiments>
</comment>
<comment type="interaction">
    <interactant intactId="EBI-749285">
        <id>Q15311</id>
    </interactant>
    <interactant intactId="EBI-372619">
        <id>Q14687</id>
        <label>GSE1</label>
    </interactant>
    <organismsDiffer>false</organismsDiffer>
    <experiments>4</experiments>
</comment>
<comment type="interaction">
    <interactant intactId="EBI-749285">
        <id>Q15311</id>
    </interactant>
    <interactant intactId="EBI-351506">
        <id>P06396</id>
        <label>GSN</label>
    </interactant>
    <organismsDiffer>false</organismsDiffer>
    <experiments>3</experiments>
</comment>
<comment type="interaction">
    <interactant intactId="EBI-749285">
        <id>Q15311</id>
    </interactant>
    <interactant intactId="EBI-743290">
        <id>Q96ED9</id>
        <label>HOOK2</label>
    </interactant>
    <organismsDiffer>false</organismsDiffer>
    <experiments>3</experiments>
</comment>
<comment type="interaction">
    <interactant intactId="EBI-749285">
        <id>Q15311</id>
    </interactant>
    <interactant intactId="EBI-10961706">
        <id>Q96ED9-2</id>
        <label>HOOK2</label>
    </interactant>
    <organismsDiffer>false</organismsDiffer>
    <experiments>3</experiments>
</comment>
<comment type="interaction">
    <interactant intactId="EBI-749285">
        <id>Q15311</id>
    </interactant>
    <interactant intactId="EBI-350145">
        <id>P01112</id>
        <label>HRAS</label>
    </interactant>
    <organismsDiffer>false</organismsDiffer>
    <experiments>3</experiments>
</comment>
<comment type="interaction">
    <interactant intactId="EBI-749285">
        <id>Q15311</id>
    </interactant>
    <interactant intactId="EBI-2556193">
        <id>Q63ZY3</id>
        <label>KANK2</label>
    </interactant>
    <organismsDiffer>false</organismsDiffer>
    <experiments>3</experiments>
</comment>
<comment type="interaction">
    <interactant intactId="EBI-749285">
        <id>Q15311</id>
    </interactant>
    <interactant intactId="EBI-740738">
        <id>O95751</id>
        <label>LDOC1</label>
    </interactant>
    <organismsDiffer>false</organismsDiffer>
    <experiments>3</experiments>
</comment>
<comment type="interaction">
    <interactant intactId="EBI-749285">
        <id>Q15311</id>
    </interactant>
    <interactant intactId="EBI-7850168">
        <id>Q8NCY6</id>
        <label>MSANTD4</label>
    </interactant>
    <organismsDiffer>false</organismsDiffer>
    <experiments>6</experiments>
</comment>
<comment type="interaction">
    <interactant intactId="EBI-749285">
        <id>Q15311</id>
    </interactant>
    <interactant intactId="EBI-11742977">
        <id>Q15154-3</id>
        <label>PCM1</label>
    </interactant>
    <organismsDiffer>false</organismsDiffer>
    <experiments>3</experiments>
</comment>
<comment type="interaction">
    <interactant intactId="EBI-749285">
        <id>Q15311</id>
    </interactant>
    <interactant intactId="EBI-368321">
        <id>O60437</id>
        <label>PPL</label>
    </interactant>
    <organismsDiffer>false</organismsDiffer>
    <experiments>5</experiments>
</comment>
<comment type="interaction">
    <interactant intactId="EBI-749285">
        <id>Q15311</id>
    </interactant>
    <interactant intactId="EBI-1105153">
        <id>Q96KQ4</id>
        <label>PPP1R13B</label>
    </interactant>
    <organismsDiffer>false</organismsDiffer>
    <experiments>3</experiments>
</comment>
<comment type="interaction">
    <interactant intactId="EBI-749285">
        <id>Q15311</id>
    </interactant>
    <interactant intactId="EBI-1036803">
        <id>P11233</id>
        <label>RALA</label>
    </interactant>
    <organismsDiffer>false</organismsDiffer>
    <experiments>6</experiments>
</comment>
<comment type="interaction">
    <interactant intactId="EBI-749285">
        <id>Q15311</id>
    </interactant>
    <interactant intactId="EBI-1171195">
        <id>Q96D71</id>
        <label>REPS1</label>
    </interactant>
    <organismsDiffer>false</organismsDiffer>
    <experiments>8</experiments>
</comment>
<comment type="interaction">
    <interactant intactId="EBI-749285">
        <id>Q15311</id>
    </interactant>
    <interactant intactId="EBI-2561646">
        <id>Q86UD0</id>
        <label>SAPCD2</label>
    </interactant>
    <organismsDiffer>false</organismsDiffer>
    <experiments>8</experiments>
</comment>
<comment type="interaction">
    <interactant intactId="EBI-749285">
        <id>Q15311</id>
    </interactant>
    <interactant intactId="EBI-357345">
        <id>Q14160</id>
        <label>SCRIB</label>
    </interactant>
    <organismsDiffer>false</organismsDiffer>
    <experiments>2</experiments>
</comment>
<comment type="interaction">
    <interactant intactId="EBI-749285">
        <id>Q15311</id>
    </interactant>
    <interactant intactId="EBI-455078">
        <id>Q969G3</id>
        <label>SMARCE1</label>
    </interactant>
    <organismsDiffer>false</organismsDiffer>
    <experiments>6</experiments>
</comment>
<comment type="interaction">
    <interactant intactId="EBI-749285">
        <id>Q15311</id>
    </interactant>
    <interactant intactId="EBI-6872807">
        <id>Q8N0S2</id>
        <label>SYCE1</label>
    </interactant>
    <organismsDiffer>false</organismsDiffer>
    <experiments>3</experiments>
</comment>
<comment type="interaction">
    <interactant intactId="EBI-749285">
        <id>Q15311</id>
    </interactant>
    <interactant intactId="EBI-529518">
        <id>Q86VP1</id>
        <label>TAX1BP1</label>
    </interactant>
    <organismsDiffer>false</organismsDiffer>
    <experiments>3</experiments>
</comment>
<comment type="interaction">
    <interactant intactId="EBI-749285">
        <id>Q15311</id>
    </interactant>
    <interactant intactId="EBI-10223693">
        <id>Q05BL0</id>
        <label>TBRG1</label>
    </interactant>
    <organismsDiffer>false</organismsDiffer>
    <experiments>3</experiments>
</comment>
<comment type="interaction">
    <interactant intactId="EBI-749285">
        <id>Q15311</id>
    </interactant>
    <interactant intactId="EBI-3923210">
        <id>Q8TDR4</id>
        <label>TCP10L</label>
    </interactant>
    <organismsDiffer>false</organismsDiffer>
    <experiments>3</experiments>
</comment>
<comment type="interaction">
    <interactant intactId="EBI-749285">
        <id>Q15311</id>
    </interactant>
    <interactant intactId="EBI-10178002">
        <id>P0C1Z6-2</id>
        <label>TFPT</label>
    </interactant>
    <organismsDiffer>false</organismsDiffer>
    <experiments>5</experiments>
</comment>
<comment type="interaction">
    <interactant intactId="EBI-749285">
        <id>Q15311</id>
    </interactant>
    <interactant intactId="EBI-357849">
        <id>Q15025</id>
        <label>TNIP1</label>
    </interactant>
    <organismsDiffer>false</organismsDiffer>
    <experiments>4</experiments>
</comment>
<comment type="interaction">
    <interactant intactId="EBI-749285">
        <id>Q15311</id>
    </interactant>
    <interactant intactId="EBI-11952721">
        <id>Q05BL1</id>
        <label>TP53BP2</label>
    </interactant>
    <organismsDiffer>false</organismsDiffer>
    <experiments>3</experiments>
</comment>
<comment type="interaction">
    <interactant intactId="EBI-749285">
        <id>Q15311</id>
    </interactant>
    <interactant intactId="EBI-1049298">
        <id>P43897</id>
        <label>TSFM</label>
    </interactant>
    <organismsDiffer>false</organismsDiffer>
    <experiments>4</experiments>
</comment>
<comment type="interaction">
    <interactant intactId="EBI-749285">
        <id>Q15311</id>
    </interactant>
    <interactant intactId="EBI-301270">
        <id>P40337-3</id>
        <label>VHL</label>
    </interactant>
    <organismsDiffer>false</organismsDiffer>
    <experiments>3</experiments>
</comment>
<comment type="interaction">
    <interactant intactId="EBI-749285">
        <id>Q15311</id>
    </interactant>
    <interactant intactId="EBI-748111">
        <id>Q96C28</id>
        <label>ZNF707</label>
    </interactant>
    <organismsDiffer>false</organismsDiffer>
    <experiments>6</experiments>
</comment>
<comment type="interaction">
    <interactant intactId="EBI-749285">
        <id>Q15311</id>
    </interactant>
    <interactant intactId="EBI-10307481">
        <id>Q9H6F0</id>
    </interactant>
    <organismsDiffer>false</organismsDiffer>
    <experiments>3</experiments>
</comment>
<comment type="subcellular location">
    <subcellularLocation>
        <location evidence="9">Cell membrane</location>
        <topology evidence="7 9 11">Peripheral membrane protein</topology>
    </subcellularLocation>
    <subcellularLocation>
        <location evidence="11 14">Cytoplasm</location>
        <location evidence="11 14">Cytosol</location>
    </subcellularLocation>
    <subcellularLocation>
        <location evidence="2">Cytoplasm</location>
        <location evidence="2">Cytoskeleton</location>
        <location evidence="2">Spindle pole</location>
    </subcellularLocation>
    <subcellularLocation>
        <location evidence="14">Nucleus</location>
    </subcellularLocation>
    <subcellularLocation>
        <location evidence="13">Mitochondrion</location>
    </subcellularLocation>
    <text evidence="2 3 13 14 25">Cytosolic protein that transiently associates with the mitotic spindle poles in early prophase, and dissociates from them after completion of mitosis (By similarity). Targeted to the plasma membrane through its interaction with RALB, directed by FGF signaling. Docking on the membrane is required to transduce the Ral signal (By similarity). Recruited by RALA to the mitochondrion during mitosis where it regulates mitochondrial fission (PubMed:21822277). Nuclear localization is cell cycle dependent while membrane localization is seen in adherent cells (PubMed:22319010). The region involved in membrane association could form transmembrane domains and expose a part of the protein extracellularly (Probable).</text>
</comment>
<comment type="tissue specificity">
    <text evidence="9">Expressed ubiquitously but at low levels. Shows a strong expression in the erythrocytes.</text>
</comment>
<comment type="domain">
    <text evidence="2">The Rho-GAP domain mediates the GTPase activator activity toward CDC42.</text>
</comment>
<comment type="PTM">
    <text evidence="1">Tyrosine-phosphorylated upon stimulation of cells with EGF.</text>
</comment>
<comment type="PTM">
    <text evidence="23">May undergo proteolytic cleavage to give peptides which reassemble to form a transporter complex.</text>
</comment>
<comment type="miscellaneous">
    <text evidence="18">Originally designated as dinitrophenyl S-glutathione (DNP-SG) ATPase due to its ability to stimulate ATP hydrolysis in the presence of DNP-SG.</text>
</comment>
<gene>
    <name evidence="27" type="primary">RALBP1</name>
    <name evidence="19" type="synonym">RLIP</name>
    <name evidence="20" type="synonym">RLIP1</name>
    <name evidence="20" type="synonym">RLIP76</name>
</gene>
<feature type="initiator methionine" description="Removed" evidence="7 33">
    <location>
        <position position="1"/>
    </location>
</feature>
<feature type="chain" id="PRO_0000056733" description="RalA-binding protein 1">
    <location>
        <begin position="2"/>
        <end position="655"/>
    </location>
</feature>
<feature type="domain" description="Rho-GAP" evidence="4">
    <location>
        <begin position="192"/>
        <end position="380"/>
    </location>
</feature>
<feature type="region of interest" description="Disordered" evidence="5">
    <location>
        <begin position="1"/>
        <end position="158"/>
    </location>
</feature>
<feature type="region of interest" description="Nuclear localization signal" evidence="3">
    <location>
        <begin position="102"/>
        <end position="119"/>
    </location>
</feature>
<feature type="region of interest" description="Mediates association with membranes and could form transmembrane domains" evidence="11">
    <location>
        <begin position="154"/>
        <end position="219"/>
    </location>
</feature>
<feature type="region of interest" description="Mediates interaction with RALA and RALB" evidence="12 15">
    <location>
        <begin position="403"/>
        <end position="499"/>
    </location>
</feature>
<feature type="region of interest" description="Mediates interaction with REPS1 and REPS2" evidence="2">
    <location>
        <begin position="500"/>
        <end position="655"/>
    </location>
</feature>
<feature type="region of interest" description="Disordered" evidence="5">
    <location>
        <begin position="525"/>
        <end position="551"/>
    </location>
</feature>
<feature type="region of interest" description="Disordered" evidence="5">
    <location>
        <begin position="601"/>
        <end position="655"/>
    </location>
</feature>
<feature type="compositionally biased region" description="Polar residues" evidence="5">
    <location>
        <begin position="24"/>
        <end position="33"/>
    </location>
</feature>
<feature type="compositionally biased region" description="Basic and acidic residues" evidence="5">
    <location>
        <begin position="52"/>
        <end position="68"/>
    </location>
</feature>
<feature type="compositionally biased region" description="Basic residues" evidence="5">
    <location>
        <begin position="69"/>
        <end position="79"/>
    </location>
</feature>
<feature type="compositionally biased region" description="Basic residues" evidence="5">
    <location>
        <begin position="102"/>
        <end position="118"/>
    </location>
</feature>
<feature type="compositionally biased region" description="Basic and acidic residues" evidence="5">
    <location>
        <begin position="119"/>
        <end position="155"/>
    </location>
</feature>
<feature type="compositionally biased region" description="Acidic residues" evidence="5">
    <location>
        <begin position="536"/>
        <end position="551"/>
    </location>
</feature>
<feature type="compositionally biased region" description="Basic and acidic residues" evidence="5">
    <location>
        <begin position="624"/>
        <end position="655"/>
    </location>
</feature>
<feature type="binding site" evidence="23">
    <location>
        <begin position="69"/>
        <end position="74"/>
    </location>
    <ligand>
        <name>ATP</name>
        <dbReference type="ChEBI" id="CHEBI:30616"/>
    </ligand>
</feature>
<feature type="binding site" evidence="23">
    <location>
        <begin position="418"/>
        <end position="425"/>
    </location>
    <ligand>
        <name>ATP</name>
        <dbReference type="ChEBI" id="CHEBI:30616"/>
    </ligand>
</feature>
<feature type="site" description="Arginine finger; crucial for GTP hydrolysis by stabilizing the transition state" evidence="4">
    <location>
        <position position="232"/>
    </location>
</feature>
<feature type="modified residue" description="N-acetylthreonine" evidence="33">
    <location>
        <position position="2"/>
    </location>
</feature>
<feature type="modified residue" description="Phosphoserine" evidence="36">
    <location>
        <position position="29"/>
    </location>
</feature>
<feature type="modified residue" description="Phosphoserine" evidence="36">
    <location>
        <position position="30"/>
    </location>
</feature>
<feature type="modified residue" description="Phosphoserine" evidence="36">
    <location>
        <position position="34"/>
    </location>
</feature>
<feature type="modified residue" description="Phosphothreonine" evidence="37">
    <location>
        <position position="44"/>
    </location>
</feature>
<feature type="modified residue" description="Phosphoserine" evidence="37">
    <location>
        <position position="48"/>
    </location>
</feature>
<feature type="modified residue" description="Phosphoserine" evidence="31 36 37">
    <location>
        <position position="62"/>
    </location>
</feature>
<feature type="modified residue" description="Phosphoserine" evidence="32 34 36 37">
    <location>
        <position position="92"/>
    </location>
</feature>
<feature type="modified residue" description="Phosphoserine" evidence="32 34 36 37">
    <location>
        <position position="93"/>
    </location>
</feature>
<feature type="modified residue" description="Phosphoserine" evidence="36">
    <location>
        <position position="461"/>
    </location>
</feature>
<feature type="modified residue" description="Phosphoserine" evidence="35 36 37">
    <location>
        <position position="463"/>
    </location>
</feature>
<feature type="modified residue" description="Phosphoserine" evidence="37">
    <location>
        <position position="645"/>
    </location>
</feature>
<feature type="sequence variant" id="VAR_049147" description="In dbSNP:rs35867116.">
    <original>A</original>
    <variation>V</variation>
    <location>
        <position position="617"/>
    </location>
</feature>
<feature type="mutagenesis site" description="Loss of ATP-binding and transport-associated ATPase activity." evidence="23">
    <original>K</original>
    <variation>M</variation>
    <location>
        <position position="74"/>
    </location>
</feature>
<feature type="mutagenesis site" description="Loss of ATP-binding and transport-associated ATPase activity." evidence="23">
    <original>K</original>
    <variation>M</variation>
    <location>
        <position position="425"/>
    </location>
</feature>
<feature type="strand" evidence="38">
    <location>
        <begin position="184"/>
        <end position="187"/>
    </location>
</feature>
<feature type="helix" evidence="38">
    <location>
        <begin position="194"/>
        <end position="200"/>
    </location>
</feature>
<feature type="helix" evidence="38">
    <location>
        <begin position="211"/>
        <end position="222"/>
    </location>
</feature>
<feature type="turn" evidence="38">
    <location>
        <begin position="223"/>
        <end position="225"/>
    </location>
</feature>
<feature type="turn" evidence="38">
    <location>
        <begin position="228"/>
        <end position="232"/>
    </location>
</feature>
<feature type="helix" evidence="38">
    <location>
        <begin position="237"/>
        <end position="248"/>
    </location>
</feature>
<feature type="helix" evidence="38">
    <location>
        <begin position="255"/>
        <end position="257"/>
    </location>
</feature>
<feature type="helix" evidence="38">
    <location>
        <begin position="260"/>
        <end position="273"/>
    </location>
</feature>
<feature type="helix" evidence="38">
    <location>
        <begin position="280"/>
        <end position="291"/>
    </location>
</feature>
<feature type="helix" evidence="38">
    <location>
        <begin position="296"/>
        <end position="309"/>
    </location>
</feature>
<feature type="helix" evidence="38">
    <location>
        <begin position="312"/>
        <end position="334"/>
    </location>
</feature>
<feature type="helix" evidence="38">
    <location>
        <begin position="339"/>
        <end position="350"/>
    </location>
</feature>
<feature type="helix" evidence="38">
    <location>
        <begin position="354"/>
        <end position="367"/>
    </location>
</feature>
<feature type="strand" evidence="38">
    <location>
        <begin position="384"/>
        <end position="386"/>
    </location>
</feature>
<feature type="helix" evidence="39">
    <location>
        <begin position="396"/>
        <end position="416"/>
    </location>
</feature>
<feature type="turn" evidence="38">
    <location>
        <begin position="417"/>
        <end position="419"/>
    </location>
</feature>
<feature type="helix" evidence="39">
    <location>
        <begin position="423"/>
        <end position="443"/>
    </location>
</feature>